<organism>
    <name type="scientific">Salmonella typhimurium (strain LT2 / SGSC1412 / ATCC 700720)</name>
    <dbReference type="NCBI Taxonomy" id="99287"/>
    <lineage>
        <taxon>Bacteria</taxon>
        <taxon>Pseudomonadati</taxon>
        <taxon>Pseudomonadota</taxon>
        <taxon>Gammaproteobacteria</taxon>
        <taxon>Enterobacterales</taxon>
        <taxon>Enterobacteriaceae</taxon>
        <taxon>Salmonella</taxon>
    </lineage>
</organism>
<proteinExistence type="evidence at protein level"/>
<sequence length="685" mass="73942">MVTSVRTQPPVIMPGMQTEIKTQATNLAANLSAVRESATATLSGEIKGPQLEDFPALIKQASLDALFKCGKDAEALKEVFTNSNNVAGKKAIMEFAGLFRSALNATSDSPEAKTLLMKVGAEYTAQIIKDGLKEKSAFGPWLPETKKAEAKLENLEKQLLDIIKNNTGGELSKLSTNLVMQEVMPYIASCIEHNFGCTLDPLTRSNLTHLVDKAAAKAVEALDMCHQKLTQEQGTSVGREARHLEMQTLIPLLLRNVFAQIPADKLPDPKIPEPAAGPVPDGGKKAEPTGINININIDSSNHSVDNSKHINNSRSHVDNSQRHIDNSNHDNSRKTIDNSRTFIDNSQRNGESHHSTNSSNVSHSHSRVDSTTHQTETAHSASTGAIDHGIAGKIDVTAHATAEAVTNASSESKDGKVVTSEKGTTGETTSFDEVDGVTSKSIIGKPVQATVHGVDDNKQQSQTAEIVNVKPLASQLAGVENVKTDTLQSDTTVITGNKAGTTDNDNSQTDKTGPFSGLKFKQNSFLSTVPSVTNMHSMHFDARETFLGVIRKALEPDTSTPFPVRRAFDGLRAEILPNDTIKSAALKAQCSDIDKHPELKAKMETLKEVITHHPQKEKLAEIALQFAREAGLTRLKGETDYVLSNVLDGLIGDGSWRAGPAYESYLNKPGVDRVITTVDGLHMQR</sequence>
<evidence type="ECO:0000256" key="1">
    <source>
        <dbReference type="SAM" id="MobiDB-lite"/>
    </source>
</evidence>
<evidence type="ECO:0000269" key="2">
    <source>
    </source>
</evidence>
<evidence type="ECO:0000269" key="3">
    <source>
    </source>
</evidence>
<evidence type="ECO:0000269" key="4">
    <source>
    </source>
</evidence>
<evidence type="ECO:0000305" key="5"/>
<evidence type="ECO:0007829" key="6">
    <source>
        <dbReference type="PDB" id="1Q5Z"/>
    </source>
</evidence>
<evidence type="ECO:0007829" key="7">
    <source>
        <dbReference type="PDB" id="2FM8"/>
    </source>
</evidence>
<evidence type="ECO:0007829" key="8">
    <source>
        <dbReference type="PDB" id="2FM9"/>
    </source>
</evidence>
<evidence type="ECO:0007829" key="9">
    <source>
        <dbReference type="PDB" id="8UEE"/>
    </source>
</evidence>
<name>SIPA_SALTY</name>
<reference key="1">
    <citation type="journal article" date="2001" name="Nature">
        <title>Complete genome sequence of Salmonella enterica serovar Typhimurium LT2.</title>
        <authorList>
            <person name="McClelland M."/>
            <person name="Sanderson K.E."/>
            <person name="Spieth J."/>
            <person name="Clifton S.W."/>
            <person name="Latreille P."/>
            <person name="Courtney L."/>
            <person name="Porwollik S."/>
            <person name="Ali J."/>
            <person name="Dante M."/>
            <person name="Du F."/>
            <person name="Hou S."/>
            <person name="Layman D."/>
            <person name="Leonard S."/>
            <person name="Nguyen C."/>
            <person name="Scott K."/>
            <person name="Holmes A."/>
            <person name="Grewal N."/>
            <person name="Mulvaney E."/>
            <person name="Ryan E."/>
            <person name="Sun H."/>
            <person name="Florea L."/>
            <person name="Miller W."/>
            <person name="Stoneking T."/>
            <person name="Nhan M."/>
            <person name="Waterston R."/>
            <person name="Wilson R.K."/>
        </authorList>
    </citation>
    <scope>NUCLEOTIDE SEQUENCE [LARGE SCALE GENOMIC DNA]</scope>
    <source>
        <strain>LT2 / SGSC1412 / ATCC 700720</strain>
    </source>
</reference>
<reference key="2">
    <citation type="journal article" date="1995" name="J. Bacteriol.">
        <title>Identification of two targets of the type III protein secretion system encoded by the inv and spa loci of Salmonella typhimurium that have homology to the Shigella IpaD and IpaA proteins.</title>
        <authorList>
            <person name="Kaniga K."/>
            <person name="Trollinger D."/>
            <person name="Galan J.E."/>
        </authorList>
    </citation>
    <scope>SUBCELLULAR LOCATION</scope>
    <source>
        <strain>SL1344</strain>
    </source>
</reference>
<reference key="3">
    <citation type="journal article" date="1999" name="Science">
        <title>Role of the S. typhimurium actin-binding protein SipA in bacterial internalization.</title>
        <authorList>
            <person name="Zhou D."/>
            <person name="Mooseker M.S."/>
            <person name="Galan J.E."/>
        </authorList>
    </citation>
    <scope>FUNCTION</scope>
    <source>
        <strain>SL1344</strain>
    </source>
</reference>
<reference key="4">
    <citation type="journal article" date="1999" name="Proc. Natl. Acad. Sci. U.S.A.">
        <title>An invasion-associated Salmonella protein modulates the actin-bundling activity of plastin.</title>
        <authorList>
            <person name="Zhou D."/>
            <person name="Mooseker M.S."/>
            <person name="Galan J.E."/>
        </authorList>
    </citation>
    <scope>INTERACTION WITH HOST T-PLASTIN</scope>
    <source>
        <strain>SL1344</strain>
    </source>
</reference>
<reference key="5">
    <citation type="journal article" date="2001" name="EMBO J.">
        <title>Cooperation between actin-binding proteins of invasive Salmonella: SipA potentiates SipC nucleation and bundling of actin.</title>
        <authorList>
            <person name="McGhie E.J."/>
            <person name="Hayward R.D."/>
            <person name="Koronakis V."/>
        </authorList>
    </citation>
    <scope>COOPERATIVE INTERACTION WITH SIPC</scope>
    <source>
        <strain>SJW1103</strain>
    </source>
</reference>
<reference key="6">
    <citation type="journal article" date="2004" name="Mol. Cell">
        <title>Control of actin turnover by a salmonella invasion protein.</title>
        <authorList>
            <person name="McGhie E.J."/>
            <person name="Hayward R.D."/>
            <person name="Koronakis V."/>
        </authorList>
    </citation>
    <scope>FUNCTION</scope>
    <source>
        <strain>SJW1103</strain>
    </source>
</reference>
<reference key="7">
    <citation type="journal article" date="2003" name="Science">
        <title>Salmonella SipA polymerizes actin by stapling filaments with nonglobular protein arms.</title>
        <authorList>
            <person name="Lilic M."/>
            <person name="Galkin V.E."/>
            <person name="Orlova A."/>
            <person name="VanLoock M.S."/>
            <person name="Egelman E.H."/>
            <person name="Stebbins C.E."/>
        </authorList>
    </citation>
    <scope>X-RAY CRYSTALLOGRAPHY (1.8 ANGSTROMS) OF 499-668</scope>
    <scope>INTERACTION WITH HOST F-ACTIN</scope>
</reference>
<reference key="8">
    <citation type="journal article" date="2006" name="Mol. Cell">
        <title>A common structural motif in the binding of virulence factors to bacterial secretion chaperones.</title>
        <authorList>
            <person name="Lilic M."/>
            <person name="Vujanac M."/>
            <person name="Stebbins C.E."/>
        </authorList>
    </citation>
    <scope>X-RAY CRYSTALLOGRAPHY (2.2 ANGSTROMS) OF 23-262 ALONE AND IN COMPLEX WITH SPAK</scope>
</reference>
<feature type="chain" id="PRO_0000221451" description="Cell invasion protein SipA">
    <location>
        <begin position="1"/>
        <end position="685"/>
    </location>
</feature>
<feature type="region of interest" description="Disordered" evidence="1">
    <location>
        <begin position="265"/>
        <end position="386"/>
    </location>
</feature>
<feature type="region of interest" description="Disordered" evidence="1">
    <location>
        <begin position="404"/>
        <end position="432"/>
    </location>
</feature>
<feature type="region of interest" description="Disordered" evidence="1">
    <location>
        <begin position="494"/>
        <end position="514"/>
    </location>
</feature>
<feature type="region of interest" description="Actin-binding and polymerization">
    <location>
        <begin position="497"/>
        <end position="669"/>
    </location>
</feature>
<feature type="compositionally biased region" description="Low complexity" evidence="1">
    <location>
        <begin position="291"/>
        <end position="304"/>
    </location>
</feature>
<feature type="compositionally biased region" description="Basic and acidic residues" evidence="1">
    <location>
        <begin position="315"/>
        <end position="337"/>
    </location>
</feature>
<feature type="compositionally biased region" description="Polar residues" evidence="1">
    <location>
        <begin position="338"/>
        <end position="349"/>
    </location>
</feature>
<feature type="compositionally biased region" description="Polar residues" evidence="1">
    <location>
        <begin position="369"/>
        <end position="383"/>
    </location>
</feature>
<feature type="compositionally biased region" description="Low complexity" evidence="1">
    <location>
        <begin position="417"/>
        <end position="429"/>
    </location>
</feature>
<feature type="compositionally biased region" description="Polar residues" evidence="1">
    <location>
        <begin position="494"/>
        <end position="511"/>
    </location>
</feature>
<feature type="helix" evidence="7">
    <location>
        <begin position="26"/>
        <end position="29"/>
    </location>
</feature>
<feature type="strand" evidence="7">
    <location>
        <begin position="31"/>
        <end position="39"/>
    </location>
</feature>
<feature type="helix" evidence="8">
    <location>
        <begin position="51"/>
        <end position="53"/>
    </location>
</feature>
<feature type="helix" evidence="8">
    <location>
        <begin position="55"/>
        <end position="68"/>
    </location>
</feature>
<feature type="helix" evidence="8">
    <location>
        <begin position="73"/>
        <end position="82"/>
    </location>
</feature>
<feature type="helix" evidence="8">
    <location>
        <begin position="86"/>
        <end position="105"/>
    </location>
</feature>
<feature type="turn" evidence="8">
    <location>
        <begin position="106"/>
        <end position="108"/>
    </location>
</feature>
<feature type="helix" evidence="8">
    <location>
        <begin position="110"/>
        <end position="130"/>
    </location>
</feature>
<feature type="strand" evidence="8">
    <location>
        <begin position="137"/>
        <end position="139"/>
    </location>
</feature>
<feature type="helix" evidence="8">
    <location>
        <begin position="146"/>
        <end position="165"/>
    </location>
</feature>
<feature type="helix" evidence="8">
    <location>
        <begin position="168"/>
        <end position="181"/>
    </location>
</feature>
<feature type="helix" evidence="8">
    <location>
        <begin position="183"/>
        <end position="195"/>
    </location>
</feature>
<feature type="helix" evidence="8">
    <location>
        <begin position="201"/>
        <end position="227"/>
    </location>
</feature>
<feature type="helix" evidence="8">
    <location>
        <begin position="245"/>
        <end position="258"/>
    </location>
</feature>
<feature type="turn" evidence="6">
    <location>
        <begin position="522"/>
        <end position="525"/>
    </location>
</feature>
<feature type="helix" evidence="6">
    <location>
        <begin position="526"/>
        <end position="528"/>
    </location>
</feature>
<feature type="helix" evidence="6">
    <location>
        <begin position="532"/>
        <end position="535"/>
    </location>
</feature>
<feature type="helix" evidence="6">
    <location>
        <begin position="542"/>
        <end position="553"/>
    </location>
</feature>
<feature type="helix" evidence="6">
    <location>
        <begin position="562"/>
        <end position="575"/>
    </location>
</feature>
<feature type="helix" evidence="6">
    <location>
        <begin position="580"/>
        <end position="590"/>
    </location>
</feature>
<feature type="helix" evidence="6">
    <location>
        <begin position="591"/>
        <end position="595"/>
    </location>
</feature>
<feature type="helix" evidence="6">
    <location>
        <begin position="597"/>
        <end position="611"/>
    </location>
</feature>
<feature type="helix" evidence="6">
    <location>
        <begin position="616"/>
        <end position="630"/>
    </location>
</feature>
<feature type="turn" evidence="6">
    <location>
        <begin position="632"/>
        <end position="635"/>
    </location>
</feature>
<feature type="helix" evidence="6">
    <location>
        <begin position="636"/>
        <end position="638"/>
    </location>
</feature>
<feature type="helix" evidence="6">
    <location>
        <begin position="641"/>
        <end position="650"/>
    </location>
</feature>
<feature type="helix" evidence="6">
    <location>
        <begin position="655"/>
        <end position="657"/>
    </location>
</feature>
<feature type="helix" evidence="9">
    <location>
        <begin position="677"/>
        <end position="681"/>
    </location>
</feature>
<accession>P0CL52</accession>
<accession>Q56027</accession>
<accession>Q56034</accession>
<accession>Q8ZMH9</accession>
<keyword id="KW-0002">3D-structure</keyword>
<keyword id="KW-0009">Actin-binding</keyword>
<keyword id="KW-1185">Reference proteome</keyword>
<keyword id="KW-0964">Secreted</keyword>
<keyword id="KW-0843">Virulence</keyword>
<dbReference type="EMBL" id="AE006468">
    <property type="protein sequence ID" value="AAL21762.1"/>
    <property type="molecule type" value="Genomic_DNA"/>
</dbReference>
<dbReference type="RefSeq" id="NP_461803.1">
    <property type="nucleotide sequence ID" value="NC_003197.2"/>
</dbReference>
<dbReference type="RefSeq" id="WP_000258811.1">
    <property type="nucleotide sequence ID" value="NC_003197.2"/>
</dbReference>
<dbReference type="PDB" id="1Q5Z">
    <property type="method" value="X-ray"/>
    <property type="resolution" value="1.80 A"/>
    <property type="chains" value="A=498-670"/>
</dbReference>
<dbReference type="PDB" id="2FM8">
    <property type="method" value="X-ray"/>
    <property type="resolution" value="2.20 A"/>
    <property type="chains" value="C=23-262"/>
</dbReference>
<dbReference type="PDB" id="2FM9">
    <property type="method" value="X-ray"/>
    <property type="resolution" value="2.00 A"/>
    <property type="chains" value="A=49-263"/>
</dbReference>
<dbReference type="PDB" id="8UEE">
    <property type="method" value="EM"/>
    <property type="resolution" value="3.20 A"/>
    <property type="chains" value="A/B/C/D=425-685"/>
</dbReference>
<dbReference type="PDB" id="8VFM">
    <property type="method" value="EM"/>
    <property type="resolution" value="3.60 A"/>
    <property type="chains" value="A/B/C/I=1-685"/>
</dbReference>
<dbReference type="PDBsum" id="1Q5Z"/>
<dbReference type="PDBsum" id="2FM8"/>
<dbReference type="PDBsum" id="2FM9"/>
<dbReference type="PDBsum" id="8UEE"/>
<dbReference type="PDBsum" id="8VFM"/>
<dbReference type="EMDB" id="EMD-42161"/>
<dbReference type="EMDB" id="EMD-43188"/>
<dbReference type="SMR" id="P0CL52"/>
<dbReference type="STRING" id="99287.STM2882"/>
<dbReference type="PaxDb" id="99287-STM2882"/>
<dbReference type="GeneID" id="1254405"/>
<dbReference type="KEGG" id="stm:STM2882"/>
<dbReference type="PATRIC" id="fig|99287.12.peg.3038"/>
<dbReference type="HOGENOM" id="CLU_410980_0_0_6"/>
<dbReference type="BioCyc" id="SENT99287:STM2882-MONOMER"/>
<dbReference type="EvolutionaryTrace" id="P0CL52"/>
<dbReference type="PHI-base" id="PHI:7224"/>
<dbReference type="PHI-base" id="PHI:7922"/>
<dbReference type="Proteomes" id="UP000001014">
    <property type="component" value="Chromosome"/>
</dbReference>
<dbReference type="GO" id="GO:0005576">
    <property type="term" value="C:extracellular region"/>
    <property type="evidence" value="ECO:0007669"/>
    <property type="project" value="UniProtKB-SubCell"/>
</dbReference>
<dbReference type="GO" id="GO:0003779">
    <property type="term" value="F:actin binding"/>
    <property type="evidence" value="ECO:0007669"/>
    <property type="project" value="UniProtKB-KW"/>
</dbReference>
<dbReference type="DisProt" id="DP00157"/>
<dbReference type="Gene3D" id="1.10.4110.10">
    <property type="entry name" value="Salmonella invasion protein A, C-terminal actin-binding domain"/>
    <property type="match status" value="1"/>
</dbReference>
<dbReference type="Gene3D" id="1.10.4150.10">
    <property type="entry name" value="SipA N-terminal domain-like"/>
    <property type="match status" value="1"/>
</dbReference>
<dbReference type="InterPro" id="IPR023224">
    <property type="entry name" value="SipA_actin-bd_C_sf"/>
</dbReference>
<dbReference type="InterPro" id="IPR054043">
    <property type="entry name" value="SipA_C"/>
</dbReference>
<dbReference type="InterPro" id="IPR023225">
    <property type="entry name" value="SipA_chaperone-bd"/>
</dbReference>
<dbReference type="InterPro" id="IPR015138">
    <property type="entry name" value="SipA_N"/>
</dbReference>
<dbReference type="NCBIfam" id="NF011903">
    <property type="entry name" value="PRK15376.1"/>
    <property type="match status" value="1"/>
</dbReference>
<dbReference type="Pfam" id="PF09052">
    <property type="entry name" value="SipA"/>
    <property type="match status" value="1"/>
</dbReference>
<dbReference type="Pfam" id="PF22163">
    <property type="entry name" value="SipA_2nd"/>
    <property type="match status" value="1"/>
</dbReference>
<dbReference type="SUPFAM" id="SSF101312">
    <property type="entry name" value="Invasion protein A (SipA) , C-terminal actin binding domain"/>
    <property type="match status" value="1"/>
</dbReference>
<dbReference type="SUPFAM" id="SSF140746">
    <property type="entry name" value="SipA N-terminal domain-like"/>
    <property type="match status" value="1"/>
</dbReference>
<protein>
    <recommendedName>
        <fullName>Cell invasion protein SipA</fullName>
    </recommendedName>
    <alternativeName>
        <fullName>Effector protein SipA</fullName>
    </alternativeName>
</protein>
<gene>
    <name type="primary">sipA</name>
    <name type="synonym">sspA</name>
    <name type="ordered locus">STM2882</name>
</gene>
<comment type="function">
    <text evidence="2 3">Actin-binding protein that interferes with host cell actin cytoskeleton. It stimulates actin polymerization and counteracts F-actin destabilizing proteins. Potentiates SipC activity; both are required for an efficient bacterial internalization. In vitro, forms a complex with host cell protein T-plastin increasing actin bundling. It inhibits ADF/cofilin-directed depolymerization both by preventing binding of ADF and cofilin and by displacing them from F-actin. Also protects F-actin from gelsolin-directed severing and reanneals gelsolin-severed F-actin fragments.</text>
</comment>
<comment type="subcellular location">
    <subcellularLocation>
        <location evidence="4">Secreted</location>
    </subcellularLocation>
    <text>Secreted via the type III secretion system 1 (SPI-1 T3SS).</text>
</comment>
<comment type="similarity">
    <text evidence="5">Belongs to the SipA/IpaA family.</text>
</comment>